<protein>
    <recommendedName>
        <fullName>Natural killer cells antigen CD94</fullName>
    </recommendedName>
    <alternativeName>
        <fullName>Killer cell lectin-like receptor subfamily D member 1</fullName>
    </alternativeName>
    <alternativeName>
        <fullName>NK cell receptor</fullName>
    </alternativeName>
    <cdAntigenName>CD94</cdAntigenName>
</protein>
<keyword id="KW-1064">Adaptive immunity</keyword>
<keyword id="KW-0025">Alternative splicing</keyword>
<keyword id="KW-1003">Cell membrane</keyword>
<keyword id="KW-1015">Disulfide bond</keyword>
<keyword id="KW-0325">Glycoprotein</keyword>
<keyword id="KW-0391">Immunity</keyword>
<keyword id="KW-0399">Innate immunity</keyword>
<keyword id="KW-0430">Lectin</keyword>
<keyword id="KW-0472">Membrane</keyword>
<keyword id="KW-0675">Receptor</keyword>
<keyword id="KW-1185">Reference proteome</keyword>
<keyword id="KW-0735">Signal-anchor</keyword>
<keyword id="KW-0812">Transmembrane</keyword>
<keyword id="KW-1133">Transmembrane helix</keyword>
<sequence>MAVFKTTLWRLISGTLGIICLSLMATLGILLKNSFTKLSIEPAFTPGPNIELQKDSDCCSCQEKWVGYRCNCYFISSEQKTWNESRHLCASQKSSLLQLQNTDELDFMSSSQQFYWIGLSYSEEHTAWLWENGSALSQYLFPSFETFNPKNCIAYNPNGNALDESCEDKNRYICKQQLI</sequence>
<name>KLRD1_PANTR</name>
<dbReference type="EMBL" id="AF259054">
    <property type="protein sequence ID" value="AAF86964.1"/>
    <property type="molecule type" value="mRNA"/>
</dbReference>
<dbReference type="RefSeq" id="NP_001009062.1">
    <molecule id="Q9MZ41-1"/>
    <property type="nucleotide sequence ID" value="NM_001009062.1"/>
</dbReference>
<dbReference type="RefSeq" id="XP_009423053.1">
    <property type="nucleotide sequence ID" value="XM_009424778.2"/>
</dbReference>
<dbReference type="RefSeq" id="XP_016778010.1">
    <property type="nucleotide sequence ID" value="XM_016922521.1"/>
</dbReference>
<dbReference type="SMR" id="Q9MZ41"/>
<dbReference type="FunCoup" id="Q9MZ41">
    <property type="interactions" value="217"/>
</dbReference>
<dbReference type="STRING" id="9598.ENSPTRP00000057110"/>
<dbReference type="GlyCosmos" id="Q9MZ41">
    <property type="glycosylation" value="2 sites, No reported glycans"/>
</dbReference>
<dbReference type="PaxDb" id="9598-ENSPTRP00000057110"/>
<dbReference type="Ensembl" id="ENSPTRT00000065546.3">
    <molecule id="Q9MZ41-1"/>
    <property type="protein sequence ID" value="ENSPTRP00000057110.3"/>
    <property type="gene ID" value="ENSPTRG00000004671.7"/>
</dbReference>
<dbReference type="GeneID" id="450156"/>
<dbReference type="CTD" id="3824"/>
<dbReference type="eggNOG" id="KOG4297">
    <property type="taxonomic scope" value="Eukaryota"/>
</dbReference>
<dbReference type="GeneTree" id="ENSGT00940000160107"/>
<dbReference type="HOGENOM" id="CLU_049894_9_3_1"/>
<dbReference type="InParanoid" id="Q9MZ41"/>
<dbReference type="OMA" id="RFICERK"/>
<dbReference type="TreeFam" id="TF336674"/>
<dbReference type="Proteomes" id="UP000002277">
    <property type="component" value="Chromosome 12"/>
</dbReference>
<dbReference type="Bgee" id="ENSPTRG00000004671">
    <property type="expression patterns" value="Expressed in lung and 20 other cell types or tissues"/>
</dbReference>
<dbReference type="GO" id="GO:0009897">
    <property type="term" value="C:external side of plasma membrane"/>
    <property type="evidence" value="ECO:0000318"/>
    <property type="project" value="GO_Central"/>
</dbReference>
<dbReference type="GO" id="GO:0005886">
    <property type="term" value="C:plasma membrane"/>
    <property type="evidence" value="ECO:0000250"/>
    <property type="project" value="UniProtKB"/>
</dbReference>
<dbReference type="GO" id="GO:0043235">
    <property type="term" value="C:receptor complex"/>
    <property type="evidence" value="ECO:0007669"/>
    <property type="project" value="Ensembl"/>
</dbReference>
<dbReference type="GO" id="GO:0030246">
    <property type="term" value="F:carbohydrate binding"/>
    <property type="evidence" value="ECO:0007669"/>
    <property type="project" value="UniProtKB-KW"/>
</dbReference>
<dbReference type="GO" id="GO:0062082">
    <property type="term" value="F:HLA-E specific inhibitory MHC class Ib receptor activity"/>
    <property type="evidence" value="ECO:0007669"/>
    <property type="project" value="Ensembl"/>
</dbReference>
<dbReference type="GO" id="GO:0023024">
    <property type="term" value="F:MHC class I protein complex binding"/>
    <property type="evidence" value="ECO:0007669"/>
    <property type="project" value="Ensembl"/>
</dbReference>
<dbReference type="GO" id="GO:0023030">
    <property type="term" value="F:MHC class Ib protein binding, via antigen binding groove"/>
    <property type="evidence" value="ECO:0007669"/>
    <property type="project" value="Ensembl"/>
</dbReference>
<dbReference type="GO" id="GO:1990405">
    <property type="term" value="F:protein antigen binding"/>
    <property type="evidence" value="ECO:0007669"/>
    <property type="project" value="Ensembl"/>
</dbReference>
<dbReference type="GO" id="GO:0004888">
    <property type="term" value="F:transmembrane signaling receptor activity"/>
    <property type="evidence" value="ECO:0000318"/>
    <property type="project" value="GO_Central"/>
</dbReference>
<dbReference type="GO" id="GO:0002250">
    <property type="term" value="P:adaptive immune response"/>
    <property type="evidence" value="ECO:0007669"/>
    <property type="project" value="UniProtKB-KW"/>
</dbReference>
<dbReference type="GO" id="GO:0002228">
    <property type="term" value="P:natural killer cell mediated immunity"/>
    <property type="evidence" value="ECO:0007669"/>
    <property type="project" value="Ensembl"/>
</dbReference>
<dbReference type="GO" id="GO:0045953">
    <property type="term" value="P:negative regulation of natural killer cell mediated cytotoxicity"/>
    <property type="evidence" value="ECO:0000250"/>
    <property type="project" value="UniProtKB"/>
</dbReference>
<dbReference type="GO" id="GO:0001915">
    <property type="term" value="P:negative regulation of T cell mediated cytotoxicity"/>
    <property type="evidence" value="ECO:0000250"/>
    <property type="project" value="UniProtKB"/>
</dbReference>
<dbReference type="GO" id="GO:0045954">
    <property type="term" value="P:positive regulation of natural killer cell mediated cytotoxicity"/>
    <property type="evidence" value="ECO:0000318"/>
    <property type="project" value="GO_Central"/>
</dbReference>
<dbReference type="GO" id="GO:0002223">
    <property type="term" value="P:stimulatory C-type lectin receptor signaling pathway"/>
    <property type="evidence" value="ECO:0000250"/>
    <property type="project" value="UniProtKB"/>
</dbReference>
<dbReference type="CDD" id="cd03593">
    <property type="entry name" value="CLECT_NK_receptors_like"/>
    <property type="match status" value="1"/>
</dbReference>
<dbReference type="FunFam" id="3.10.100.10:FF:000064">
    <property type="entry name" value="Natural killer cells antigen CD94"/>
    <property type="match status" value="1"/>
</dbReference>
<dbReference type="Gene3D" id="3.10.100.10">
    <property type="entry name" value="Mannose-Binding Protein A, subunit A"/>
    <property type="match status" value="1"/>
</dbReference>
<dbReference type="InterPro" id="IPR001304">
    <property type="entry name" value="C-type_lectin-like"/>
</dbReference>
<dbReference type="InterPro" id="IPR016186">
    <property type="entry name" value="C-type_lectin-like/link_sf"/>
</dbReference>
<dbReference type="InterPro" id="IPR016187">
    <property type="entry name" value="CTDL_fold"/>
</dbReference>
<dbReference type="InterPro" id="IPR050919">
    <property type="entry name" value="NKG2/CD94_NK_receptors"/>
</dbReference>
<dbReference type="InterPro" id="IPR033992">
    <property type="entry name" value="NKR-like_CTLD"/>
</dbReference>
<dbReference type="PANTHER" id="PTHR22800">
    <property type="entry name" value="C-TYPE LECTIN PROTEINS"/>
    <property type="match status" value="1"/>
</dbReference>
<dbReference type="PANTHER" id="PTHR22800:SF252">
    <property type="entry name" value="NATURAL KILLER CELLS ANTIGEN CD94"/>
    <property type="match status" value="1"/>
</dbReference>
<dbReference type="Pfam" id="PF00059">
    <property type="entry name" value="Lectin_C"/>
    <property type="match status" value="1"/>
</dbReference>
<dbReference type="SMART" id="SM00034">
    <property type="entry name" value="CLECT"/>
    <property type="match status" value="1"/>
</dbReference>
<dbReference type="SUPFAM" id="SSF56436">
    <property type="entry name" value="C-type lectin-like"/>
    <property type="match status" value="1"/>
</dbReference>
<dbReference type="PROSITE" id="PS50041">
    <property type="entry name" value="C_TYPE_LECTIN_2"/>
    <property type="match status" value="1"/>
</dbReference>
<organism>
    <name type="scientific">Pan troglodytes</name>
    <name type="common">Chimpanzee</name>
    <dbReference type="NCBI Taxonomy" id="9598"/>
    <lineage>
        <taxon>Eukaryota</taxon>
        <taxon>Metazoa</taxon>
        <taxon>Chordata</taxon>
        <taxon>Craniata</taxon>
        <taxon>Vertebrata</taxon>
        <taxon>Euteleostomi</taxon>
        <taxon>Mammalia</taxon>
        <taxon>Eutheria</taxon>
        <taxon>Euarchontoglires</taxon>
        <taxon>Primates</taxon>
        <taxon>Haplorrhini</taxon>
        <taxon>Catarrhini</taxon>
        <taxon>Hominidae</taxon>
        <taxon>Pan</taxon>
    </lineage>
</organism>
<gene>
    <name type="primary">KLRD1</name>
    <name type="synonym">CD94</name>
</gene>
<proteinExistence type="evidence at transcript level"/>
<comment type="function">
    <text evidence="1">Immune receptor involved in self-nonself discrimination. In complex with KLRC1 or KLRC2 on cytotoxic and regulatory lymphocyte subsets, recognizes non-classical major histocompatibility (MHC) class Ib molecule MHC-E loaded with self-peptides derived from the signal sequence of classical MHC class Ia and non-classical MHC class Ib molecules. Enables cytotoxic cells to monitor the expression of MHC class I molecules in healthy cells and to tolerate self. Primarily functions as a ligand binding subunit as it lacks the capacity to signal.</text>
</comment>
<comment type="function">
    <text evidence="1">KLRD1-KLRC1 acts as an immune inhibitory receptor. Key inhibitory receptor on natural killer (NK) cells that regulates their activation and effector functions. Dominantly counteracts T cell receptor signaling on a subset of memory/effector CD8-positive T cells as part of an antigen-driven response to avoid autoimmunity. On intraepithelial CD8-positive gamma-delta regulatory T cells triggers TGFB1 secretion, which in turn limits the cytotoxic programming of intraepithelial CD8-positive alpha-beta T cells, distinguishing harmless from pathogenic antigens. In MHC-E-rich tumor microenvironment, acts as an immune inhibitory checkpoint and may contribute to progressive loss of effector functions of NK cells and tumor-specific T cells, a state known as cell exhaustion. Upon MHC-E-peptide binding, transmits intracellular signals through KLRC1 immunoreceptor tyrosine-based inhibition motifs (ITIMs) by recruiting INPP5D/SHIP-1 and INPPL1/SHIP-2 tyrosine phosphatases to ITIMs, and ultimately opposing signals transmitted by activating receptors through dephosphorylation of proximal signaling molecules.</text>
</comment>
<comment type="function">
    <text evidence="1">KLRD1-KLRC2 acts as an immune activating receptor. On cytotoxic lymphocyte subsets recognizes MHC-E loaded with signal sequence-derived peptides from non-classical MHC class Ib MHC-G molecules, likely playing a role in the generation and effector functions of adaptive NK cells and in maternal-fetal tolerance during pregnancy. Regulates the effector functions of terminally differentiated cytotoxic lymphocyte subsets, and in particular may play a role in adaptive NK cell response to viral infection. Upon MHC-E-peptide binding, transmits intracellular signals via the adapter protein TYROBP/DAP12, triggering the phosphorylation of proximal signaling molecules and cell activation.</text>
</comment>
<comment type="subunit">
    <text evidence="1">Can form disulfide-bonded heterodimer with NKG2 family members KLRC1 and KLRC2. KLRD1-KLRC1 heterodimer interacts with peptide-bound MHC-E-B2M heterotrimeric complex. KLRD1 plays a prominent role in directly interacting with MHC-E. KLRD1-KLRC1 interacts with much higher affinity with peptide-bound MHC-E-B2M than KLRD1-KLRC2. Interacts with the adapter protein TYROBP/DAP12; this interaction is required for cell surface expression and cell activation.</text>
</comment>
<comment type="subcellular location">
    <subcellularLocation>
        <location evidence="1">Cell membrane</location>
        <topology evidence="2">Single-pass type II membrane protein</topology>
    </subcellularLocation>
</comment>
<comment type="alternative products">
    <event type="alternative splicing"/>
    <isoform>
        <id>Q9MZ41-1</id>
        <name>1</name>
        <name>CD94-A</name>
        <sequence type="displayed"/>
    </isoform>
    <isoform>
        <id>Q9MZ41-2</id>
        <name>2</name>
        <name>CD94-B</name>
        <sequence type="described" ref="VSP_003056"/>
    </isoform>
    <text>Additional isoforms seem to exist.</text>
</comment>
<comment type="tissue specificity">
    <text>Natural killer cells.</text>
</comment>
<evidence type="ECO:0000250" key="1">
    <source>
        <dbReference type="UniProtKB" id="Q13241"/>
    </source>
</evidence>
<evidence type="ECO:0000255" key="2"/>
<evidence type="ECO:0000255" key="3">
    <source>
        <dbReference type="PROSITE-ProRule" id="PRU00040"/>
    </source>
</evidence>
<evidence type="ECO:0000305" key="4"/>
<reference key="1">
    <citation type="journal article" date="2000" name="Immunity">
        <title>Rapid evolution of NK cell receptor systems demonstrated by comparison of chimpanzees and humans.</title>
        <authorList>
            <person name="Khakoo S.I."/>
            <person name="Rajalingam R."/>
            <person name="Shum B.P."/>
            <person name="Weidenbach K."/>
            <person name="Flodin L."/>
            <person name="Muir D.G."/>
            <person name="Canavez F."/>
            <person name="Cooper S.L."/>
            <person name="Valiante N.M."/>
            <person name="Lanier L.L."/>
            <person name="Parham P."/>
        </authorList>
    </citation>
    <scope>NUCLEOTIDE SEQUENCE [MRNA] (ISOFORM 1)</scope>
</reference>
<reference key="2">
    <citation type="journal article" date="2002" name="J. Immunol.">
        <title>Conservation and variation in human and common chimpanzee CD94 and NKG2 genes.</title>
        <authorList>
            <person name="Shum B.P."/>
            <person name="Flodin L.R."/>
            <person name="Muir D.G."/>
            <person name="Rajalingam R."/>
            <person name="Khakoo S.I."/>
            <person name="Cleland S."/>
            <person name="Guethlein L.A."/>
            <person name="Uhrberg M."/>
            <person name="Parham P."/>
        </authorList>
    </citation>
    <scope>ALTERNATIVE SPLICING</scope>
</reference>
<accession>Q9MZ41</accession>
<feature type="chain" id="PRO_0000046589" description="Natural killer cells antigen CD94">
    <location>
        <begin position="1"/>
        <end position="179"/>
    </location>
</feature>
<feature type="topological domain" description="Cytoplasmic" evidence="2">
    <location>
        <begin position="1"/>
        <end position="10"/>
    </location>
</feature>
<feature type="transmembrane region" description="Helical; Signal-anchor for type II membrane protein" evidence="2">
    <location>
        <begin position="11"/>
        <end position="31"/>
    </location>
</feature>
<feature type="topological domain" description="Extracellular" evidence="2">
    <location>
        <begin position="32"/>
        <end position="179"/>
    </location>
</feature>
<feature type="domain" description="C-type lectin" evidence="3">
    <location>
        <begin position="68"/>
        <end position="175"/>
    </location>
</feature>
<feature type="glycosylation site" description="N-linked (GlcNAc...) asparagine" evidence="2">
    <location>
        <position position="83"/>
    </location>
</feature>
<feature type="glycosylation site" description="N-linked (GlcNAc...) asparagine" evidence="2">
    <location>
        <position position="132"/>
    </location>
</feature>
<feature type="disulfide bond" evidence="3">
    <location>
        <begin position="58"/>
        <end position="70"/>
    </location>
</feature>
<feature type="disulfide bond" description="Interchain (with C-116 in KLRC1/NGK2A)" evidence="3">
    <location>
        <position position="59"/>
    </location>
</feature>
<feature type="disulfide bond" evidence="3">
    <location>
        <begin position="61"/>
        <end position="72"/>
    </location>
</feature>
<feature type="disulfide bond" evidence="3">
    <location>
        <begin position="89"/>
        <end position="174"/>
    </location>
</feature>
<feature type="disulfide bond" evidence="3">
    <location>
        <begin position="152"/>
        <end position="166"/>
    </location>
</feature>
<feature type="splice variant" id="VSP_003056" description="In isoform 2." evidence="4">
    <original>L</original>
    <variation>LQ</variation>
    <location>
        <position position="105"/>
    </location>
</feature>